<comment type="function">
    <text>Troponin I is the inhibitory subunit of troponin, the thin filament regulatory complex which confers calcium-sensitivity to striated muscle actomyosin ATPase activity.</text>
</comment>
<comment type="subunit">
    <text>Binds to actin and tropomyosin.</text>
</comment>
<comment type="tissue specificity">
    <text>Heart.</text>
</comment>
<comment type="developmental stage">
    <text>Expressed at all stages of development.</text>
</comment>
<comment type="similarity">
    <text evidence="3">Belongs to the troponin I family.</text>
</comment>
<gene>
    <name type="primary">tnni3</name>
</gene>
<keyword id="KW-0007">Acetylation</keyword>
<keyword id="KW-0009">Actin-binding</keyword>
<keyword id="KW-0514">Muscle protein</keyword>
<keyword id="KW-0597">Phosphoprotein</keyword>
<keyword id="KW-1185">Reference proteome</keyword>
<sequence length="244" mass="28198">MSDEEEVTYEEEEEEYVEEEEEEVVAPEPPKPAPPPAAPPPLIRRRSSANYRSYATEPQVKRKPKISASRKLQLNTMMLQIAKAEMEREEEERAREKERYLAEHCQPLQLSGLSRSELQDLCQELHARIDVVDEERYDMEAKVNKNITELEDLNQKIFDLRGKFKKPNLRRVRLSADAMMMALLGTKHKVSMDLRANLKQVKQTKKDDADKDIREVGDWRKNVDALSGMEGRKKKFESTGAAAV</sequence>
<accession>P50754</accession>
<dbReference type="EMBL" id="L25721">
    <property type="protein sequence ID" value="AAA65727.1"/>
    <property type="molecule type" value="mRNA"/>
</dbReference>
<dbReference type="PIR" id="I51408">
    <property type="entry name" value="I51408"/>
</dbReference>
<dbReference type="SMR" id="P50754"/>
<dbReference type="GeneID" id="397803"/>
<dbReference type="KEGG" id="xla:397803"/>
<dbReference type="AGR" id="Xenbase:XB-GENE-17334604"/>
<dbReference type="CTD" id="397803"/>
<dbReference type="Xenbase" id="XB-GENE-17334604">
    <property type="gene designation" value="tnni3.S"/>
</dbReference>
<dbReference type="OrthoDB" id="371899at2759"/>
<dbReference type="Proteomes" id="UP000186698">
    <property type="component" value="Chromosome 7S"/>
</dbReference>
<dbReference type="Bgee" id="397803">
    <property type="expression patterns" value="Expressed in heart and 10 other cell types or tissues"/>
</dbReference>
<dbReference type="GO" id="GO:0005861">
    <property type="term" value="C:troponin complex"/>
    <property type="evidence" value="ECO:0000318"/>
    <property type="project" value="GO_Central"/>
</dbReference>
<dbReference type="GO" id="GO:0003779">
    <property type="term" value="F:actin binding"/>
    <property type="evidence" value="ECO:0007669"/>
    <property type="project" value="UniProtKB-KW"/>
</dbReference>
<dbReference type="GO" id="GO:0060048">
    <property type="term" value="P:cardiac muscle contraction"/>
    <property type="evidence" value="ECO:0000318"/>
    <property type="project" value="GO_Central"/>
</dbReference>
<dbReference type="GO" id="GO:0003009">
    <property type="term" value="P:skeletal muscle contraction"/>
    <property type="evidence" value="ECO:0000318"/>
    <property type="project" value="GO_Central"/>
</dbReference>
<dbReference type="FunFam" id="1.20.5.350:FF:000002">
    <property type="entry name" value="troponin I, fast skeletal muscle"/>
    <property type="match status" value="1"/>
</dbReference>
<dbReference type="Gene3D" id="1.20.5.350">
    <property type="match status" value="1"/>
</dbReference>
<dbReference type="Gene3D" id="6.10.250.180">
    <property type="match status" value="1"/>
</dbReference>
<dbReference type="InterPro" id="IPR001978">
    <property type="entry name" value="Troponin"/>
</dbReference>
<dbReference type="InterPro" id="IPR050875">
    <property type="entry name" value="Troponin_I"/>
</dbReference>
<dbReference type="InterPro" id="IPR038077">
    <property type="entry name" value="Troponin_sf"/>
</dbReference>
<dbReference type="PANTHER" id="PTHR13738">
    <property type="entry name" value="TROPONIN I"/>
    <property type="match status" value="1"/>
</dbReference>
<dbReference type="PANTHER" id="PTHR13738:SF2">
    <property type="entry name" value="TROPONIN I, CARDIAC MUSCLE"/>
    <property type="match status" value="1"/>
</dbReference>
<dbReference type="Pfam" id="PF00992">
    <property type="entry name" value="Troponin"/>
    <property type="match status" value="1"/>
</dbReference>
<dbReference type="SUPFAM" id="SSF90250">
    <property type="entry name" value="Troponin coil-coiled subunits"/>
    <property type="match status" value="1"/>
</dbReference>
<name>TNNI3_XENLA</name>
<evidence type="ECO:0000250" key="1"/>
<evidence type="ECO:0000256" key="2">
    <source>
        <dbReference type="SAM" id="MobiDB-lite"/>
    </source>
</evidence>
<evidence type="ECO:0000305" key="3"/>
<feature type="initiator methionine" description="Removed" evidence="1">
    <location>
        <position position="1"/>
    </location>
</feature>
<feature type="chain" id="PRO_0000186158" description="Troponin I, cardiac muscle">
    <location>
        <begin position="2"/>
        <end position="244"/>
    </location>
</feature>
<feature type="region of interest" description="Disordered" evidence="2">
    <location>
        <begin position="1"/>
        <end position="67"/>
    </location>
</feature>
<feature type="compositionally biased region" description="Acidic residues" evidence="2">
    <location>
        <begin position="1"/>
        <end position="25"/>
    </location>
</feature>
<feature type="compositionally biased region" description="Pro residues" evidence="2">
    <location>
        <begin position="27"/>
        <end position="42"/>
    </location>
</feature>
<feature type="modified residue" description="N-acetylserine" evidence="1">
    <location>
        <position position="2"/>
    </location>
</feature>
<feature type="modified residue" description="Phosphoserine; by CK2" evidence="1">
    <location>
        <position position="2"/>
    </location>
</feature>
<proteinExistence type="evidence at transcript level"/>
<organism>
    <name type="scientific">Xenopus laevis</name>
    <name type="common">African clawed frog</name>
    <dbReference type="NCBI Taxonomy" id="8355"/>
    <lineage>
        <taxon>Eukaryota</taxon>
        <taxon>Metazoa</taxon>
        <taxon>Chordata</taxon>
        <taxon>Craniata</taxon>
        <taxon>Vertebrata</taxon>
        <taxon>Euteleostomi</taxon>
        <taxon>Amphibia</taxon>
        <taxon>Batrachia</taxon>
        <taxon>Anura</taxon>
        <taxon>Pipoidea</taxon>
        <taxon>Pipidae</taxon>
        <taxon>Xenopodinae</taxon>
        <taxon>Xenopus</taxon>
        <taxon>Xenopus</taxon>
    </lineage>
</organism>
<protein>
    <recommendedName>
        <fullName>Troponin I, cardiac muscle</fullName>
        <shortName>Troponin IC</shortName>
    </recommendedName>
</protein>
<reference key="1">
    <citation type="journal article" date="1994" name="Dev. Biol.">
        <title>Cardiac troponin I is a heart-specific marker in the Xenopus embryo: expression during abnormal heart morphogenesis.</title>
        <authorList>
            <person name="Drysdale T.A."/>
            <person name="Tonissen K.F."/>
            <person name="Patterson K.D."/>
            <person name="Crawford M.J."/>
            <person name="Krieg P.A."/>
        </authorList>
    </citation>
    <scope>NUCLEOTIDE SEQUENCE [MRNA]</scope>
    <source>
        <tissue>Heart muscle</tissue>
    </source>
</reference>